<feature type="chain" id="PRO_0000444358" description="Gibberellin 2-beta-dioxygenase 6">
    <location>
        <begin position="1"/>
        <end position="358"/>
    </location>
</feature>
<feature type="domain" description="Fe2OG dioxygenase" evidence="2">
    <location>
        <begin position="207"/>
        <end position="308"/>
    </location>
</feature>
<feature type="binding site" evidence="1">
    <location>
        <position position="218"/>
    </location>
    <ligand>
        <name>2-oxoglutarate</name>
        <dbReference type="ChEBI" id="CHEBI:16810"/>
    </ligand>
</feature>
<feature type="binding site" evidence="2">
    <location>
        <position position="233"/>
    </location>
    <ligand>
        <name>Fe cation</name>
        <dbReference type="ChEBI" id="CHEBI:24875"/>
    </ligand>
</feature>
<feature type="binding site" evidence="2">
    <location>
        <position position="235"/>
    </location>
    <ligand>
        <name>Fe cation</name>
        <dbReference type="ChEBI" id="CHEBI:24875"/>
    </ligand>
</feature>
<feature type="binding site" evidence="2">
    <location>
        <position position="289"/>
    </location>
    <ligand>
        <name>Fe cation</name>
        <dbReference type="ChEBI" id="CHEBI:24875"/>
    </ligand>
</feature>
<feature type="binding site" evidence="2">
    <location>
        <position position="299"/>
    </location>
    <ligand>
        <name>2-oxoglutarate</name>
        <dbReference type="ChEBI" id="CHEBI:16810"/>
    </ligand>
</feature>
<feature type="binding site" evidence="1">
    <location>
        <position position="301"/>
    </location>
    <ligand>
        <name>2-oxoglutarate</name>
        <dbReference type="ChEBI" id="CHEBI:16810"/>
    </ligand>
</feature>
<proteinExistence type="evidence at protein level"/>
<organism>
    <name type="scientific">Oryza sativa subsp. japonica</name>
    <name type="common">Rice</name>
    <dbReference type="NCBI Taxonomy" id="39947"/>
    <lineage>
        <taxon>Eukaryota</taxon>
        <taxon>Viridiplantae</taxon>
        <taxon>Streptophyta</taxon>
        <taxon>Embryophyta</taxon>
        <taxon>Tracheophyta</taxon>
        <taxon>Spermatophyta</taxon>
        <taxon>Magnoliopsida</taxon>
        <taxon>Liliopsida</taxon>
        <taxon>Poales</taxon>
        <taxon>Poaceae</taxon>
        <taxon>BOP clade</taxon>
        <taxon>Oryzoideae</taxon>
        <taxon>Oryzeae</taxon>
        <taxon>Oryzinae</taxon>
        <taxon>Oryza</taxon>
        <taxon>Oryza sativa</taxon>
    </lineage>
</organism>
<name>G2OX6_ORYSJ</name>
<accession>Q7XP65</accession>
<sequence>MPAFADIAIDPPLADSYRALALLRRDRDGGIAPPAVQMVGSGGAVLERDLPMVDLERLTRGGAGERKACAGAMARAASEWGFFQLTNHGVGRELMEEMRREQARLFRLPFETKEKAGLLNGSYRWGNPTATSLRHLSWSEAFHVPLASISGADCDFGDLTSLRGVMQEVAEAMSRVANTVAAALAEELTGRGGGGASAAPWFPAGCDETTCFLRLNRYPACPFAADTFGLVPHTDSDFLTVLCQDQVGGLHLMKDSRWVAVRPRPDALVVNIGDLFQAWSNNRYKSVEHKVVANAKTDRLSVAYFLCPSYDSLVGTCGEPSPYRAFTFGEYRKKVQEDVRTTGKKIGLPNFFKHSSVQ</sequence>
<keyword id="KW-0963">Cytoplasm</keyword>
<keyword id="KW-0223">Dioxygenase</keyword>
<keyword id="KW-0408">Iron</keyword>
<keyword id="KW-0479">Metal-binding</keyword>
<keyword id="KW-0539">Nucleus</keyword>
<keyword id="KW-0560">Oxidoreductase</keyword>
<keyword id="KW-1185">Reference proteome</keyword>
<comment type="function">
    <text evidence="3 4">Catalyzes the 2-beta-hydroxylation of several biologically active gibberellins, leading to the homeostatic regulation of their endogenous level. Catabolism of gibberellins (GAs) plays a central role in plant development (PubMed:18952778, PubMed:20171575). In vitro, converts GA12 and GA53 to the corresponding 2-beta-hydroxylated products GA110 and GA97, respectively.</text>
</comment>
<comment type="catalytic activity">
    <reaction evidence="3">
        <text>gibberellin A1 + 2-oxoglutarate + O2 = gibberellin A8 + succinate + CO2</text>
        <dbReference type="Rhea" id="RHEA:15005"/>
        <dbReference type="ChEBI" id="CHEBI:15379"/>
        <dbReference type="ChEBI" id="CHEBI:16526"/>
        <dbReference type="ChEBI" id="CHEBI:16810"/>
        <dbReference type="ChEBI" id="CHEBI:30031"/>
        <dbReference type="ChEBI" id="CHEBI:58524"/>
        <dbReference type="ChEBI" id="CHEBI:58594"/>
        <dbReference type="EC" id="1.14.11.13"/>
    </reaction>
</comment>
<comment type="cofactor">
    <cofactor evidence="3">
        <name>L-ascorbate</name>
        <dbReference type="ChEBI" id="CHEBI:38290"/>
    </cofactor>
</comment>
<comment type="cofactor">
    <cofactor evidence="2">
        <name>Fe(2+)</name>
        <dbReference type="ChEBI" id="CHEBI:29033"/>
    </cofactor>
    <text evidence="2">Binds 1 Fe(2+) ion per subunit.</text>
</comment>
<comment type="subcellular location">
    <subcellularLocation>
        <location evidence="4">Cytoplasm</location>
    </subcellularLocation>
    <subcellularLocation>
        <location evidence="4">Nucleus</location>
    </subcellularLocation>
</comment>
<comment type="tissue specificity">
    <text evidence="4">Expressed in panicles. Expressed at low levels in young shoots, leaf blades and elongating internodes.</text>
</comment>
<comment type="miscellaneous">
    <text evidence="3 4">Plants overexpressing GA2OX6 exhibit extremely dwarf phenotype and are unable to achieve phase transition from vegetative to reproductive growth. This phenotype can be rescued by application of exogenous gibberellin (GA3).</text>
</comment>
<comment type="similarity">
    <text evidence="6">Belongs to the iron/ascorbate-dependent oxidoreductase family. GA2OX subfamily.</text>
</comment>
<dbReference type="EC" id="1.14.11.13" evidence="3"/>
<dbReference type="EMBL" id="AL662958">
    <property type="protein sequence ID" value="CAE03751.1"/>
    <property type="molecule type" value="Genomic_DNA"/>
</dbReference>
<dbReference type="EMBL" id="AP008210">
    <property type="protein sequence ID" value="BAF15255.1"/>
    <property type="molecule type" value="Genomic_DNA"/>
</dbReference>
<dbReference type="EMBL" id="AP014960">
    <property type="protein sequence ID" value="BAS90133.1"/>
    <property type="molecule type" value="Genomic_DNA"/>
</dbReference>
<dbReference type="EMBL" id="CM000141">
    <property type="protein sequence ID" value="EAZ31370.1"/>
    <property type="molecule type" value="Genomic_DNA"/>
</dbReference>
<dbReference type="SMR" id="Q7XP65"/>
<dbReference type="FunCoup" id="Q7XP65">
    <property type="interactions" value="6"/>
</dbReference>
<dbReference type="STRING" id="39947.Q7XP65"/>
<dbReference type="PaxDb" id="39947-Q7XP65"/>
<dbReference type="EnsemblPlants" id="Os04t0522500-01">
    <property type="protein sequence ID" value="Os04t0522500-01"/>
    <property type="gene ID" value="Os04g0522500"/>
</dbReference>
<dbReference type="Gramene" id="Os04t0522500-01">
    <property type="protein sequence ID" value="Os04t0522500-01"/>
    <property type="gene ID" value="Os04g0522500"/>
</dbReference>
<dbReference type="KEGG" id="dosa:Os04g0522500"/>
<dbReference type="KEGG" id="osa:4336431"/>
<dbReference type="eggNOG" id="KOG0143">
    <property type="taxonomic scope" value="Eukaryota"/>
</dbReference>
<dbReference type="HOGENOM" id="CLU_010119_15_1_1"/>
<dbReference type="InParanoid" id="Q7XP65"/>
<dbReference type="OMA" id="CDFGELN"/>
<dbReference type="OrthoDB" id="288590at2759"/>
<dbReference type="Proteomes" id="UP000000763">
    <property type="component" value="Chromosome 4"/>
</dbReference>
<dbReference type="Proteomes" id="UP000007752">
    <property type="component" value="Chromosome 4"/>
</dbReference>
<dbReference type="Proteomes" id="UP000059680">
    <property type="component" value="Chromosome 4"/>
</dbReference>
<dbReference type="GO" id="GO:0005737">
    <property type="term" value="C:cytoplasm"/>
    <property type="evidence" value="ECO:0000314"/>
    <property type="project" value="UniProtKB"/>
</dbReference>
<dbReference type="GO" id="GO:0005634">
    <property type="term" value="C:nucleus"/>
    <property type="evidence" value="ECO:0000314"/>
    <property type="project" value="UniProtKB"/>
</dbReference>
<dbReference type="GO" id="GO:0045543">
    <property type="term" value="F:gibberellin 2-beta-dioxygenase activity"/>
    <property type="evidence" value="ECO:0000314"/>
    <property type="project" value="UniProtKB"/>
</dbReference>
<dbReference type="GO" id="GO:0046872">
    <property type="term" value="F:metal ion binding"/>
    <property type="evidence" value="ECO:0007669"/>
    <property type="project" value="UniProtKB-KW"/>
</dbReference>
<dbReference type="GO" id="GO:0010336">
    <property type="term" value="P:gibberellic acid homeostasis"/>
    <property type="evidence" value="ECO:0000315"/>
    <property type="project" value="UniProtKB"/>
</dbReference>
<dbReference type="GO" id="GO:0045487">
    <property type="term" value="P:gibberellin catabolic process"/>
    <property type="evidence" value="ECO:0000315"/>
    <property type="project" value="UniProtKB"/>
</dbReference>
<dbReference type="FunFam" id="2.60.120.330:FF:000021">
    <property type="entry name" value="Gibberellin 2-beta-dioxygenase 8"/>
    <property type="match status" value="1"/>
</dbReference>
<dbReference type="Gene3D" id="2.60.120.330">
    <property type="entry name" value="B-lactam Antibiotic, Isopenicillin N Synthase, Chain"/>
    <property type="match status" value="1"/>
</dbReference>
<dbReference type="InterPro" id="IPR026992">
    <property type="entry name" value="DIOX_N"/>
</dbReference>
<dbReference type="InterPro" id="IPR044861">
    <property type="entry name" value="IPNS-like_FE2OG_OXY"/>
</dbReference>
<dbReference type="InterPro" id="IPR027443">
    <property type="entry name" value="IPNS-like_sf"/>
</dbReference>
<dbReference type="InterPro" id="IPR050231">
    <property type="entry name" value="Iron_ascorbate_oxido_reductase"/>
</dbReference>
<dbReference type="InterPro" id="IPR005123">
    <property type="entry name" value="Oxoglu/Fe-dep_dioxygenase_dom"/>
</dbReference>
<dbReference type="PANTHER" id="PTHR47990">
    <property type="entry name" value="2-OXOGLUTARATE (2OG) AND FE(II)-DEPENDENT OXYGENASE SUPERFAMILY PROTEIN-RELATED"/>
    <property type="match status" value="1"/>
</dbReference>
<dbReference type="Pfam" id="PF03171">
    <property type="entry name" value="2OG-FeII_Oxy"/>
    <property type="match status" value="1"/>
</dbReference>
<dbReference type="Pfam" id="PF14226">
    <property type="entry name" value="DIOX_N"/>
    <property type="match status" value="1"/>
</dbReference>
<dbReference type="PRINTS" id="PR00682">
    <property type="entry name" value="IPNSYNTHASE"/>
</dbReference>
<dbReference type="SUPFAM" id="SSF51197">
    <property type="entry name" value="Clavaminate synthase-like"/>
    <property type="match status" value="1"/>
</dbReference>
<dbReference type="PROSITE" id="PS51471">
    <property type="entry name" value="FE2OG_OXY"/>
    <property type="match status" value="1"/>
</dbReference>
<gene>
    <name evidence="5" type="primary">GA2OX6</name>
    <name evidence="7" type="ordered locus">Os04g0522500</name>
    <name evidence="6" type="ordered locus">LOC_Os04g44150</name>
    <name evidence="9" type="ORF">OsJ_15497</name>
    <name evidence="8" type="ORF">OSJNBa0019D11.23</name>
</gene>
<evidence type="ECO:0000250" key="1">
    <source>
        <dbReference type="UniProtKB" id="D4N500"/>
    </source>
</evidence>
<evidence type="ECO:0000255" key="2">
    <source>
        <dbReference type="PROSITE-ProRule" id="PRU00805"/>
    </source>
</evidence>
<evidence type="ECO:0000269" key="3">
    <source>
    </source>
</evidence>
<evidence type="ECO:0000269" key="4">
    <source>
    </source>
</evidence>
<evidence type="ECO:0000303" key="5">
    <source>
    </source>
</evidence>
<evidence type="ECO:0000305" key="6"/>
<evidence type="ECO:0000312" key="7">
    <source>
        <dbReference type="EMBL" id="BAF15255.1"/>
    </source>
</evidence>
<evidence type="ECO:0000312" key="8">
    <source>
        <dbReference type="EMBL" id="CAE03751.1"/>
    </source>
</evidence>
<evidence type="ECO:0000312" key="9">
    <source>
        <dbReference type="EMBL" id="EAZ31370.1"/>
    </source>
</evidence>
<protein>
    <recommendedName>
        <fullName evidence="6">Gibberellin 2-beta-dioxygenase 6</fullName>
        <ecNumber evidence="3">1.14.11.13</ecNumber>
    </recommendedName>
    <alternativeName>
        <fullName evidence="6">Gibberellin 2-beta-hydroxylase 6</fullName>
    </alternativeName>
    <alternativeName>
        <fullName evidence="5">Gibberellin 2-oxidase 6</fullName>
        <shortName evidence="5">GA 2-oxidase 6</shortName>
        <shortName evidence="5">OsGA2ox6</shortName>
    </alternativeName>
</protein>
<reference key="1">
    <citation type="journal article" date="2002" name="Nature">
        <title>Sequence and analysis of rice chromosome 4.</title>
        <authorList>
            <person name="Feng Q."/>
            <person name="Zhang Y."/>
            <person name="Hao P."/>
            <person name="Wang S."/>
            <person name="Fu G."/>
            <person name="Huang Y."/>
            <person name="Li Y."/>
            <person name="Zhu J."/>
            <person name="Liu Y."/>
            <person name="Hu X."/>
            <person name="Jia P."/>
            <person name="Zhang Y."/>
            <person name="Zhao Q."/>
            <person name="Ying K."/>
            <person name="Yu S."/>
            <person name="Tang Y."/>
            <person name="Weng Q."/>
            <person name="Zhang L."/>
            <person name="Lu Y."/>
            <person name="Mu J."/>
            <person name="Lu Y."/>
            <person name="Zhang L.S."/>
            <person name="Yu Z."/>
            <person name="Fan D."/>
            <person name="Liu X."/>
            <person name="Lu T."/>
            <person name="Li C."/>
            <person name="Wu Y."/>
            <person name="Sun T."/>
            <person name="Lei H."/>
            <person name="Li T."/>
            <person name="Hu H."/>
            <person name="Guan J."/>
            <person name="Wu M."/>
            <person name="Zhang R."/>
            <person name="Zhou B."/>
            <person name="Chen Z."/>
            <person name="Chen L."/>
            <person name="Jin Z."/>
            <person name="Wang R."/>
            <person name="Yin H."/>
            <person name="Cai Z."/>
            <person name="Ren S."/>
            <person name="Lv G."/>
            <person name="Gu W."/>
            <person name="Zhu G."/>
            <person name="Tu Y."/>
            <person name="Jia J."/>
            <person name="Zhang Y."/>
            <person name="Chen J."/>
            <person name="Kang H."/>
            <person name="Chen X."/>
            <person name="Shao C."/>
            <person name="Sun Y."/>
            <person name="Hu Q."/>
            <person name="Zhang X."/>
            <person name="Zhang W."/>
            <person name="Wang L."/>
            <person name="Ding C."/>
            <person name="Sheng H."/>
            <person name="Gu J."/>
            <person name="Chen S."/>
            <person name="Ni L."/>
            <person name="Zhu F."/>
            <person name="Chen W."/>
            <person name="Lan L."/>
            <person name="Lai Y."/>
            <person name="Cheng Z."/>
            <person name="Gu M."/>
            <person name="Jiang J."/>
            <person name="Li J."/>
            <person name="Hong G."/>
            <person name="Xue Y."/>
            <person name="Han B."/>
        </authorList>
    </citation>
    <scope>NUCLEOTIDE SEQUENCE [LARGE SCALE GENOMIC DNA]</scope>
    <source>
        <strain>cv. Nipponbare</strain>
    </source>
</reference>
<reference key="2">
    <citation type="journal article" date="2005" name="Nature">
        <title>The map-based sequence of the rice genome.</title>
        <authorList>
            <consortium name="International rice genome sequencing project (IRGSP)"/>
        </authorList>
    </citation>
    <scope>NUCLEOTIDE SEQUENCE [LARGE SCALE GENOMIC DNA]</scope>
    <source>
        <strain>cv. Nipponbare</strain>
    </source>
</reference>
<reference key="3">
    <citation type="journal article" date="2008" name="Nucleic Acids Res.">
        <title>The rice annotation project database (RAP-DB): 2008 update.</title>
        <authorList>
            <consortium name="The rice annotation project (RAP)"/>
        </authorList>
    </citation>
    <scope>GENOME REANNOTATION</scope>
    <source>
        <strain>cv. Nipponbare</strain>
    </source>
</reference>
<reference key="4">
    <citation type="journal article" date="2013" name="Rice">
        <title>Improvement of the Oryza sativa Nipponbare reference genome using next generation sequence and optical map data.</title>
        <authorList>
            <person name="Kawahara Y."/>
            <person name="de la Bastide M."/>
            <person name="Hamilton J.P."/>
            <person name="Kanamori H."/>
            <person name="McCombie W.R."/>
            <person name="Ouyang S."/>
            <person name="Schwartz D.C."/>
            <person name="Tanaka T."/>
            <person name="Wu J."/>
            <person name="Zhou S."/>
            <person name="Childs K.L."/>
            <person name="Davidson R.M."/>
            <person name="Lin H."/>
            <person name="Quesada-Ocampo L."/>
            <person name="Vaillancourt B."/>
            <person name="Sakai H."/>
            <person name="Lee S.S."/>
            <person name="Kim J."/>
            <person name="Numa H."/>
            <person name="Itoh T."/>
            <person name="Buell C.R."/>
            <person name="Matsumoto T."/>
        </authorList>
    </citation>
    <scope>GENOME REANNOTATION</scope>
    <source>
        <strain>cv. Nipponbare</strain>
    </source>
</reference>
<reference key="5">
    <citation type="journal article" date="2005" name="PLoS Biol.">
        <title>The genomes of Oryza sativa: a history of duplications.</title>
        <authorList>
            <person name="Yu J."/>
            <person name="Wang J."/>
            <person name="Lin W."/>
            <person name="Li S."/>
            <person name="Li H."/>
            <person name="Zhou J."/>
            <person name="Ni P."/>
            <person name="Dong W."/>
            <person name="Hu S."/>
            <person name="Zeng C."/>
            <person name="Zhang J."/>
            <person name="Zhang Y."/>
            <person name="Li R."/>
            <person name="Xu Z."/>
            <person name="Li S."/>
            <person name="Li X."/>
            <person name="Zheng H."/>
            <person name="Cong L."/>
            <person name="Lin L."/>
            <person name="Yin J."/>
            <person name="Geng J."/>
            <person name="Li G."/>
            <person name="Shi J."/>
            <person name="Liu J."/>
            <person name="Lv H."/>
            <person name="Li J."/>
            <person name="Wang J."/>
            <person name="Deng Y."/>
            <person name="Ran L."/>
            <person name="Shi X."/>
            <person name="Wang X."/>
            <person name="Wu Q."/>
            <person name="Li C."/>
            <person name="Ren X."/>
            <person name="Wang J."/>
            <person name="Wang X."/>
            <person name="Li D."/>
            <person name="Liu D."/>
            <person name="Zhang X."/>
            <person name="Ji Z."/>
            <person name="Zhao W."/>
            <person name="Sun Y."/>
            <person name="Zhang Z."/>
            <person name="Bao J."/>
            <person name="Han Y."/>
            <person name="Dong L."/>
            <person name="Ji J."/>
            <person name="Chen P."/>
            <person name="Wu S."/>
            <person name="Liu J."/>
            <person name="Xiao Y."/>
            <person name="Bu D."/>
            <person name="Tan J."/>
            <person name="Yang L."/>
            <person name="Ye C."/>
            <person name="Zhang J."/>
            <person name="Xu J."/>
            <person name="Zhou Y."/>
            <person name="Yu Y."/>
            <person name="Zhang B."/>
            <person name="Zhuang S."/>
            <person name="Wei H."/>
            <person name="Liu B."/>
            <person name="Lei M."/>
            <person name="Yu H."/>
            <person name="Li Y."/>
            <person name="Xu H."/>
            <person name="Wei S."/>
            <person name="He X."/>
            <person name="Fang L."/>
            <person name="Zhang Z."/>
            <person name="Zhang Y."/>
            <person name="Huang X."/>
            <person name="Su Z."/>
            <person name="Tong W."/>
            <person name="Li J."/>
            <person name="Tong Z."/>
            <person name="Li S."/>
            <person name="Ye J."/>
            <person name="Wang L."/>
            <person name="Fang L."/>
            <person name="Lei T."/>
            <person name="Chen C.-S."/>
            <person name="Chen H.-C."/>
            <person name="Xu Z."/>
            <person name="Li H."/>
            <person name="Huang H."/>
            <person name="Zhang F."/>
            <person name="Xu H."/>
            <person name="Li N."/>
            <person name="Zhao C."/>
            <person name="Li S."/>
            <person name="Dong L."/>
            <person name="Huang Y."/>
            <person name="Li L."/>
            <person name="Xi Y."/>
            <person name="Qi Q."/>
            <person name="Li W."/>
            <person name="Zhang B."/>
            <person name="Hu W."/>
            <person name="Zhang Y."/>
            <person name="Tian X."/>
            <person name="Jiao Y."/>
            <person name="Liang X."/>
            <person name="Jin J."/>
            <person name="Gao L."/>
            <person name="Zheng W."/>
            <person name="Hao B."/>
            <person name="Liu S.-M."/>
            <person name="Wang W."/>
            <person name="Yuan L."/>
            <person name="Cao M."/>
            <person name="McDermott J."/>
            <person name="Samudrala R."/>
            <person name="Wang J."/>
            <person name="Wong G.K.-S."/>
            <person name="Yang H."/>
        </authorList>
    </citation>
    <scope>NUCLEOTIDE SEQUENCE [LARGE SCALE GENOMIC DNA]</scope>
    <source>
        <strain>cv. Nipponbare</strain>
    </source>
</reference>
<reference key="6">
    <citation type="journal article" date="2008" name="Plant Cell">
        <title>A novel class of gibberellin 2-oxidases control semidwarfism, tillering, and root development in rice.</title>
        <authorList>
            <person name="Lo S.F."/>
            <person name="Yang S.Y."/>
            <person name="Chen K.T."/>
            <person name="Hsing Y.I."/>
            <person name="Zeevaart J.A."/>
            <person name="Chen L.J."/>
            <person name="Yu S.M."/>
        </authorList>
    </citation>
    <scope>FUNCTION</scope>
    <scope>CATALYTIC ACTIVITY</scope>
    <scope>COFACTOR</scope>
</reference>
<reference key="7">
    <citation type="journal article" date="2010" name="J. Genet. Genomics">
        <title>Activation of gibberellin 2-oxidase 6 decreases active gibberellin levels and creates a dominant semi-dwarf phenotype in rice (Oryza sativa L.).</title>
        <authorList>
            <person name="Huang J."/>
            <person name="Tang D."/>
            <person name="Shen Y."/>
            <person name="Qin B."/>
            <person name="Hong L."/>
            <person name="You A."/>
            <person name="Li M."/>
            <person name="Wang X."/>
            <person name="Yu H."/>
            <person name="Gu M."/>
            <person name="Cheng Z."/>
        </authorList>
    </citation>
    <scope>FUNCTION</scope>
    <scope>SUBCELLULAR LOCATION</scope>
    <scope>TISSUE SPECIFICITY</scope>
</reference>